<reference key="1">
    <citation type="journal article" date="2006" name="PLoS Genet.">
        <title>The complete genome sequence and comparative genome analysis of the high pathogenicity Yersinia enterocolitica strain 8081.</title>
        <authorList>
            <person name="Thomson N.R."/>
            <person name="Howard S."/>
            <person name="Wren B.W."/>
            <person name="Holden M.T.G."/>
            <person name="Crossman L."/>
            <person name="Challis G.L."/>
            <person name="Churcher C."/>
            <person name="Mungall K."/>
            <person name="Brooks K."/>
            <person name="Chillingworth T."/>
            <person name="Feltwell T."/>
            <person name="Abdellah Z."/>
            <person name="Hauser H."/>
            <person name="Jagels K."/>
            <person name="Maddison M."/>
            <person name="Moule S."/>
            <person name="Sanders M."/>
            <person name="Whitehead S."/>
            <person name="Quail M.A."/>
            <person name="Dougan G."/>
            <person name="Parkhill J."/>
            <person name="Prentice M.B."/>
        </authorList>
    </citation>
    <scope>NUCLEOTIDE SEQUENCE [LARGE SCALE GENOMIC DNA]</scope>
    <source>
        <strain>NCTC 13174 / 8081</strain>
    </source>
</reference>
<organism>
    <name type="scientific">Yersinia enterocolitica serotype O:8 / biotype 1B (strain NCTC 13174 / 8081)</name>
    <dbReference type="NCBI Taxonomy" id="393305"/>
    <lineage>
        <taxon>Bacteria</taxon>
        <taxon>Pseudomonadati</taxon>
        <taxon>Pseudomonadota</taxon>
        <taxon>Gammaproteobacteria</taxon>
        <taxon>Enterobacterales</taxon>
        <taxon>Yersiniaceae</taxon>
        <taxon>Yersinia</taxon>
    </lineage>
</organism>
<evidence type="ECO:0000255" key="1">
    <source>
        <dbReference type="HAMAP-Rule" id="MF_01454"/>
    </source>
</evidence>
<evidence type="ECO:0000255" key="2">
    <source>
        <dbReference type="PROSITE-ProRule" id="PRU01231"/>
    </source>
</evidence>
<evidence type="ECO:0000256" key="3">
    <source>
        <dbReference type="SAM" id="MobiDB-lite"/>
    </source>
</evidence>
<keyword id="KW-0963">Cytoplasm</keyword>
<keyword id="KW-0342">GTP-binding</keyword>
<keyword id="KW-0378">Hydrolase</keyword>
<keyword id="KW-0460">Magnesium</keyword>
<keyword id="KW-0479">Metal-binding</keyword>
<keyword id="KW-0547">Nucleotide-binding</keyword>
<gene>
    <name evidence="1" type="primary">obg</name>
    <name type="ordered locus">YE0421</name>
</gene>
<protein>
    <recommendedName>
        <fullName evidence="1">GTPase Obg</fullName>
        <ecNumber evidence="1">3.6.5.-</ecNumber>
    </recommendedName>
    <alternativeName>
        <fullName evidence="1">GTP-binding protein Obg</fullName>
    </alternativeName>
</protein>
<name>OBG_YERE8</name>
<dbReference type="EC" id="3.6.5.-" evidence="1"/>
<dbReference type="EMBL" id="AM286415">
    <property type="protein sequence ID" value="CAL10547.1"/>
    <property type="molecule type" value="Genomic_DNA"/>
</dbReference>
<dbReference type="RefSeq" id="YP_001004791.1">
    <property type="nucleotide sequence ID" value="NC_008800.1"/>
</dbReference>
<dbReference type="SMR" id="A1JIV6"/>
<dbReference type="KEGG" id="yen:YE0421"/>
<dbReference type="PATRIC" id="fig|393305.7.peg.517"/>
<dbReference type="eggNOG" id="COG0536">
    <property type="taxonomic scope" value="Bacteria"/>
</dbReference>
<dbReference type="HOGENOM" id="CLU_011747_2_0_6"/>
<dbReference type="OrthoDB" id="9807318at2"/>
<dbReference type="Proteomes" id="UP000000642">
    <property type="component" value="Chromosome"/>
</dbReference>
<dbReference type="GO" id="GO:0005737">
    <property type="term" value="C:cytoplasm"/>
    <property type="evidence" value="ECO:0007669"/>
    <property type="project" value="UniProtKB-SubCell"/>
</dbReference>
<dbReference type="GO" id="GO:0005525">
    <property type="term" value="F:GTP binding"/>
    <property type="evidence" value="ECO:0007669"/>
    <property type="project" value="UniProtKB-UniRule"/>
</dbReference>
<dbReference type="GO" id="GO:0003924">
    <property type="term" value="F:GTPase activity"/>
    <property type="evidence" value="ECO:0007669"/>
    <property type="project" value="UniProtKB-UniRule"/>
</dbReference>
<dbReference type="GO" id="GO:0000287">
    <property type="term" value="F:magnesium ion binding"/>
    <property type="evidence" value="ECO:0007669"/>
    <property type="project" value="InterPro"/>
</dbReference>
<dbReference type="GO" id="GO:0042254">
    <property type="term" value="P:ribosome biogenesis"/>
    <property type="evidence" value="ECO:0007669"/>
    <property type="project" value="UniProtKB-UniRule"/>
</dbReference>
<dbReference type="CDD" id="cd01898">
    <property type="entry name" value="Obg"/>
    <property type="match status" value="1"/>
</dbReference>
<dbReference type="FunFam" id="2.70.210.12:FF:000001">
    <property type="entry name" value="GTPase Obg"/>
    <property type="match status" value="1"/>
</dbReference>
<dbReference type="FunFam" id="3.40.50.300:FF:000185">
    <property type="entry name" value="GTPase Obg"/>
    <property type="match status" value="1"/>
</dbReference>
<dbReference type="Gene3D" id="2.70.210.12">
    <property type="entry name" value="GTP1/OBG domain"/>
    <property type="match status" value="1"/>
</dbReference>
<dbReference type="Gene3D" id="3.40.50.300">
    <property type="entry name" value="P-loop containing nucleotide triphosphate hydrolases"/>
    <property type="match status" value="1"/>
</dbReference>
<dbReference type="HAMAP" id="MF_01454">
    <property type="entry name" value="GTPase_Obg"/>
    <property type="match status" value="1"/>
</dbReference>
<dbReference type="InterPro" id="IPR031167">
    <property type="entry name" value="G_OBG"/>
</dbReference>
<dbReference type="InterPro" id="IPR006073">
    <property type="entry name" value="GTP-bd"/>
</dbReference>
<dbReference type="InterPro" id="IPR014100">
    <property type="entry name" value="GTP-bd_Obg/CgtA"/>
</dbReference>
<dbReference type="InterPro" id="IPR006074">
    <property type="entry name" value="GTP1-OBG_CS"/>
</dbReference>
<dbReference type="InterPro" id="IPR006169">
    <property type="entry name" value="GTP1_OBG_dom"/>
</dbReference>
<dbReference type="InterPro" id="IPR036726">
    <property type="entry name" value="GTP1_OBG_dom_sf"/>
</dbReference>
<dbReference type="InterPro" id="IPR045086">
    <property type="entry name" value="OBG_GTPase"/>
</dbReference>
<dbReference type="InterPro" id="IPR027417">
    <property type="entry name" value="P-loop_NTPase"/>
</dbReference>
<dbReference type="NCBIfam" id="TIGR02729">
    <property type="entry name" value="Obg_CgtA"/>
    <property type="match status" value="1"/>
</dbReference>
<dbReference type="NCBIfam" id="NF008955">
    <property type="entry name" value="PRK12297.1"/>
    <property type="match status" value="1"/>
</dbReference>
<dbReference type="NCBIfam" id="NF008956">
    <property type="entry name" value="PRK12299.1"/>
    <property type="match status" value="1"/>
</dbReference>
<dbReference type="PANTHER" id="PTHR11702">
    <property type="entry name" value="DEVELOPMENTALLY REGULATED GTP-BINDING PROTEIN-RELATED"/>
    <property type="match status" value="1"/>
</dbReference>
<dbReference type="PANTHER" id="PTHR11702:SF31">
    <property type="entry name" value="MITOCHONDRIAL RIBOSOME-ASSOCIATED GTPASE 2"/>
    <property type="match status" value="1"/>
</dbReference>
<dbReference type="Pfam" id="PF01018">
    <property type="entry name" value="GTP1_OBG"/>
    <property type="match status" value="1"/>
</dbReference>
<dbReference type="Pfam" id="PF01926">
    <property type="entry name" value="MMR_HSR1"/>
    <property type="match status" value="1"/>
</dbReference>
<dbReference type="PIRSF" id="PIRSF002401">
    <property type="entry name" value="GTP_bd_Obg/CgtA"/>
    <property type="match status" value="1"/>
</dbReference>
<dbReference type="PRINTS" id="PR00326">
    <property type="entry name" value="GTP1OBG"/>
</dbReference>
<dbReference type="SUPFAM" id="SSF82051">
    <property type="entry name" value="Obg GTP-binding protein N-terminal domain"/>
    <property type="match status" value="1"/>
</dbReference>
<dbReference type="SUPFAM" id="SSF52540">
    <property type="entry name" value="P-loop containing nucleoside triphosphate hydrolases"/>
    <property type="match status" value="1"/>
</dbReference>
<dbReference type="PROSITE" id="PS51710">
    <property type="entry name" value="G_OBG"/>
    <property type="match status" value="1"/>
</dbReference>
<dbReference type="PROSITE" id="PS00905">
    <property type="entry name" value="GTP1_OBG"/>
    <property type="match status" value="1"/>
</dbReference>
<dbReference type="PROSITE" id="PS51883">
    <property type="entry name" value="OBG"/>
    <property type="match status" value="1"/>
</dbReference>
<feature type="chain" id="PRO_0000386405" description="GTPase Obg">
    <location>
        <begin position="1"/>
        <end position="390"/>
    </location>
</feature>
<feature type="domain" description="Obg" evidence="2">
    <location>
        <begin position="1"/>
        <end position="159"/>
    </location>
</feature>
<feature type="domain" description="OBG-type G" evidence="1">
    <location>
        <begin position="160"/>
        <end position="333"/>
    </location>
</feature>
<feature type="region of interest" description="Disordered" evidence="3">
    <location>
        <begin position="363"/>
        <end position="390"/>
    </location>
</feature>
<feature type="compositionally biased region" description="Acidic residues" evidence="3">
    <location>
        <begin position="363"/>
        <end position="384"/>
    </location>
</feature>
<feature type="binding site" evidence="1">
    <location>
        <begin position="166"/>
        <end position="173"/>
    </location>
    <ligand>
        <name>GTP</name>
        <dbReference type="ChEBI" id="CHEBI:37565"/>
    </ligand>
</feature>
<feature type="binding site" evidence="1">
    <location>
        <position position="173"/>
    </location>
    <ligand>
        <name>Mg(2+)</name>
        <dbReference type="ChEBI" id="CHEBI:18420"/>
    </ligand>
</feature>
<feature type="binding site" evidence="1">
    <location>
        <begin position="191"/>
        <end position="195"/>
    </location>
    <ligand>
        <name>GTP</name>
        <dbReference type="ChEBI" id="CHEBI:37565"/>
    </ligand>
</feature>
<feature type="binding site" evidence="1">
    <location>
        <position position="193"/>
    </location>
    <ligand>
        <name>Mg(2+)</name>
        <dbReference type="ChEBI" id="CHEBI:18420"/>
    </ligand>
</feature>
<feature type="binding site" evidence="1">
    <location>
        <begin position="213"/>
        <end position="216"/>
    </location>
    <ligand>
        <name>GTP</name>
        <dbReference type="ChEBI" id="CHEBI:37565"/>
    </ligand>
</feature>
<feature type="binding site" evidence="1">
    <location>
        <begin position="283"/>
        <end position="286"/>
    </location>
    <ligand>
        <name>GTP</name>
        <dbReference type="ChEBI" id="CHEBI:37565"/>
    </ligand>
</feature>
<feature type="binding site" evidence="1">
    <location>
        <begin position="314"/>
        <end position="316"/>
    </location>
    <ligand>
        <name>GTP</name>
        <dbReference type="ChEBI" id="CHEBI:37565"/>
    </ligand>
</feature>
<accession>A1JIV6</accession>
<proteinExistence type="inferred from homology"/>
<comment type="function">
    <text evidence="1">An essential GTPase which binds GTP, GDP and possibly (p)ppGpp with moderate affinity, with high nucleotide exchange rates and a fairly low GTP hydrolysis rate. Plays a role in control of the cell cycle, stress response, ribosome biogenesis and in those bacteria that undergo differentiation, in morphogenesis control.</text>
</comment>
<comment type="cofactor">
    <cofactor evidence="1">
        <name>Mg(2+)</name>
        <dbReference type="ChEBI" id="CHEBI:18420"/>
    </cofactor>
</comment>
<comment type="subunit">
    <text evidence="1">Monomer.</text>
</comment>
<comment type="subcellular location">
    <subcellularLocation>
        <location evidence="1">Cytoplasm</location>
    </subcellularLocation>
</comment>
<comment type="similarity">
    <text evidence="1">Belongs to the TRAFAC class OBG-HflX-like GTPase superfamily. OBG GTPase family.</text>
</comment>
<sequence>MKFVDEATILVVAGDGGNGCVSFRREKYIPNGGPDGGDGGDGGDIYLLADENLNTLIDYRFVKSFRAERGENGQSRDCTGKRGKDITIKVPVGTRVLDQGTGEIVGDMTRHGQRLMVAKGGFHGLGNTRFKSSVNRAPRQKTMGTEGETRELMLELLLLADVGMLGLPNAGKSTFIRAVSAAKPKVADYPFTTLIPSLGVVRMDHEQSFVVADIPGLIEGASDGAGLGIRFLKHLERCRVLLHLVDLAPIDESDPVENAKIIINELQQYSENLAQKPRWLVFNKIDLVGPEEAEVRAKAIVEALGWEGKYYMISAANRDNVNALCWDVMNFLNSQPKAMAIAESAPEKVEFMWDDYHREQLAEVEAEAESEDDDDWDEEDDDGVEFIYER</sequence>